<protein>
    <recommendedName>
        <fullName evidence="1">UPF0757 protein YmgG</fullName>
    </recommendedName>
</protein>
<reference key="1">
    <citation type="submission" date="2008-05" db="EMBL/GenBank/DDBJ databases">
        <title>Complete sequence of Shigella boydii serotype 18 strain BS512.</title>
        <authorList>
            <person name="Rasko D.A."/>
            <person name="Rosovitz M."/>
            <person name="Maurelli A.T."/>
            <person name="Myers G."/>
            <person name="Seshadri R."/>
            <person name="Cer R."/>
            <person name="Jiang L."/>
            <person name="Ravel J."/>
            <person name="Sebastian Y."/>
        </authorList>
    </citation>
    <scope>NUCLEOTIDE SEQUENCE [LARGE SCALE GENOMIC DNA]</scope>
    <source>
        <strain>CDC 3083-94 / BS512</strain>
    </source>
</reference>
<sequence length="114" mass="10807">MKKKILAFGLISALFCSTPAMADMNRTTKGALLGAGVGLLTGNGVNGVLKGAAVGAGVGAVTEKGRDGKNARKGAKVGAAVGAVTGVLTGNGLEGAIKGAVIGGTGGAILGKMK</sequence>
<dbReference type="EMBL" id="CP001063">
    <property type="protein sequence ID" value="ACD09911.1"/>
    <property type="molecule type" value="Genomic_DNA"/>
</dbReference>
<dbReference type="RefSeq" id="WP_000726974.1">
    <property type="nucleotide sequence ID" value="NC_010658.1"/>
</dbReference>
<dbReference type="KEGG" id="sbc:SbBS512_E1325"/>
<dbReference type="HOGENOM" id="CLU_164687_0_0_6"/>
<dbReference type="Proteomes" id="UP000001030">
    <property type="component" value="Chromosome"/>
</dbReference>
<dbReference type="HAMAP" id="MF_01455">
    <property type="entry name" value="UPF0757"/>
    <property type="match status" value="1"/>
</dbReference>
<dbReference type="InterPro" id="IPR025693">
    <property type="entry name" value="Gly-zipper_OmpA-like_dom"/>
</dbReference>
<dbReference type="InterPro" id="IPR027367">
    <property type="entry name" value="Gly-zipper_YMGG"/>
</dbReference>
<dbReference type="InterPro" id="IPR022833">
    <property type="entry name" value="UPF0757_YmgG"/>
</dbReference>
<dbReference type="Pfam" id="PF13436">
    <property type="entry name" value="Gly-zipper_OmpA"/>
    <property type="match status" value="1"/>
</dbReference>
<dbReference type="Pfam" id="PF13441">
    <property type="entry name" value="Gly-zipper_YMGG"/>
    <property type="match status" value="1"/>
</dbReference>
<proteinExistence type="inferred from homology"/>
<comment type="similarity">
    <text evidence="1">Belongs to the UPF0757 family.</text>
</comment>
<keyword id="KW-1185">Reference proteome</keyword>
<name>YMGG_SHIB3</name>
<accession>B2TZ97</accession>
<feature type="chain" id="PRO_0000388964" description="UPF0757 protein YmgG">
    <location>
        <begin position="1"/>
        <end position="114"/>
    </location>
</feature>
<gene>
    <name evidence="1" type="primary">ymgG</name>
    <name type="ordered locus">SbBS512_E1325</name>
</gene>
<evidence type="ECO:0000255" key="1">
    <source>
        <dbReference type="HAMAP-Rule" id="MF_01455"/>
    </source>
</evidence>
<organism>
    <name type="scientific">Shigella boydii serotype 18 (strain CDC 3083-94 / BS512)</name>
    <dbReference type="NCBI Taxonomy" id="344609"/>
    <lineage>
        <taxon>Bacteria</taxon>
        <taxon>Pseudomonadati</taxon>
        <taxon>Pseudomonadota</taxon>
        <taxon>Gammaproteobacteria</taxon>
        <taxon>Enterobacterales</taxon>
        <taxon>Enterobacteriaceae</taxon>
        <taxon>Shigella</taxon>
    </lineage>
</organism>